<keyword id="KW-1185">Reference proteome</keyword>
<keyword id="KW-0749">Sporulation</keyword>
<accession>Q81I11</accession>
<comment type="subcellular location">
    <subcellularLocation>
        <location evidence="1">Spore core</location>
    </subcellularLocation>
</comment>
<comment type="induction">
    <text evidence="1">Expressed only in the forespore compartment of sporulating cells.</text>
</comment>
<comment type="similarity">
    <text evidence="2">Belongs to the SspH family.</text>
</comment>
<protein>
    <recommendedName>
        <fullName>Small, acid-soluble spore protein H 1</fullName>
        <shortName>SASP H 1</shortName>
    </recommendedName>
</protein>
<feature type="chain" id="PRO_0000162314" description="Small, acid-soluble spore protein H 1">
    <location>
        <begin position="1"/>
        <end position="59"/>
    </location>
</feature>
<name>SSPH1_BACCR</name>
<reference key="1">
    <citation type="journal article" date="2003" name="Nature">
        <title>Genome sequence of Bacillus cereus and comparative analysis with Bacillus anthracis.</title>
        <authorList>
            <person name="Ivanova N."/>
            <person name="Sorokin A."/>
            <person name="Anderson I."/>
            <person name="Galleron N."/>
            <person name="Candelon B."/>
            <person name="Kapatral V."/>
            <person name="Bhattacharyya A."/>
            <person name="Reznik G."/>
            <person name="Mikhailova N."/>
            <person name="Lapidus A."/>
            <person name="Chu L."/>
            <person name="Mazur M."/>
            <person name="Goltsman E."/>
            <person name="Larsen N."/>
            <person name="D'Souza M."/>
            <person name="Walunas T."/>
            <person name="Grechkin Y."/>
            <person name="Pusch G."/>
            <person name="Haselkorn R."/>
            <person name="Fonstein M."/>
            <person name="Ehrlich S.D."/>
            <person name="Overbeek R."/>
            <person name="Kyrpides N.C."/>
        </authorList>
    </citation>
    <scope>NUCLEOTIDE SEQUENCE [LARGE SCALE GENOMIC DNA]</scope>
    <source>
        <strain>ATCC 14579 / DSM 31 / CCUG 7414 / JCM 2152 / NBRC 15305 / NCIMB 9373 / NCTC 2599 / NRRL B-3711</strain>
    </source>
</reference>
<evidence type="ECO:0000250" key="1"/>
<evidence type="ECO:0000305" key="2"/>
<organism>
    <name type="scientific">Bacillus cereus (strain ATCC 14579 / DSM 31 / CCUG 7414 / JCM 2152 / NBRC 15305 / NCIMB 9373 / NCTC 2599 / NRRL B-3711)</name>
    <dbReference type="NCBI Taxonomy" id="226900"/>
    <lineage>
        <taxon>Bacteria</taxon>
        <taxon>Bacillati</taxon>
        <taxon>Bacillota</taxon>
        <taxon>Bacilli</taxon>
        <taxon>Bacillales</taxon>
        <taxon>Bacillaceae</taxon>
        <taxon>Bacillus</taxon>
        <taxon>Bacillus cereus group</taxon>
    </lineage>
</organism>
<sequence length="59" mass="6539">MDVKRVKQILSSSSRIDVTYEGVPVWIESCDEQKGSAQVYDVSNPGESVHVDVTALEEK</sequence>
<dbReference type="EMBL" id="AE016877">
    <property type="protein sequence ID" value="AAP07632.1"/>
    <property type="molecule type" value="Genomic_DNA"/>
</dbReference>
<dbReference type="RefSeq" id="NP_830431.1">
    <property type="nucleotide sequence ID" value="NC_004722.1"/>
</dbReference>
<dbReference type="RefSeq" id="WP_000382679.1">
    <property type="nucleotide sequence ID" value="NZ_CP138336.1"/>
</dbReference>
<dbReference type="STRING" id="226900.BC_0614"/>
<dbReference type="KEGG" id="bce:BC0614"/>
<dbReference type="PATRIC" id="fig|226900.8.peg.572"/>
<dbReference type="HOGENOM" id="CLU_191960_0_0_9"/>
<dbReference type="OrthoDB" id="2721675at2"/>
<dbReference type="Proteomes" id="UP000001417">
    <property type="component" value="Chromosome"/>
</dbReference>
<dbReference type="GO" id="GO:0042601">
    <property type="term" value="C:endospore-forming forespore"/>
    <property type="evidence" value="ECO:0007669"/>
    <property type="project" value="InterPro"/>
</dbReference>
<dbReference type="GO" id="GO:0030436">
    <property type="term" value="P:asexual sporulation"/>
    <property type="evidence" value="ECO:0007669"/>
    <property type="project" value="UniProtKB-UniRule"/>
</dbReference>
<dbReference type="GO" id="GO:0030435">
    <property type="term" value="P:sporulation resulting in formation of a cellular spore"/>
    <property type="evidence" value="ECO:0007669"/>
    <property type="project" value="UniProtKB-KW"/>
</dbReference>
<dbReference type="HAMAP" id="MF_00667">
    <property type="entry name" value="SspH"/>
    <property type="match status" value="1"/>
</dbReference>
<dbReference type="InterPro" id="IPR012610">
    <property type="entry name" value="SASP_SspH"/>
</dbReference>
<dbReference type="NCBIfam" id="NF002451">
    <property type="entry name" value="PRK01625.1"/>
    <property type="match status" value="1"/>
</dbReference>
<dbReference type="NCBIfam" id="TIGR02861">
    <property type="entry name" value="SASP_H"/>
    <property type="match status" value="1"/>
</dbReference>
<dbReference type="Pfam" id="PF08141">
    <property type="entry name" value="SspH"/>
    <property type="match status" value="1"/>
</dbReference>
<gene>
    <name type="primary">sspH1</name>
    <name type="ordered locus">BC_0614</name>
</gene>
<proteinExistence type="inferred from homology"/>